<dbReference type="EC" id="4.2.1.24"/>
<dbReference type="EMBL" id="AE001363">
    <property type="protein sequence ID" value="AAD18883.1"/>
    <property type="molecule type" value="Genomic_DNA"/>
</dbReference>
<dbReference type="EMBL" id="AE002161">
    <property type="protein sequence ID" value="AAF37898.1"/>
    <property type="molecule type" value="Genomic_DNA"/>
</dbReference>
<dbReference type="EMBL" id="BA000008">
    <property type="protein sequence ID" value="BAA98951.1"/>
    <property type="molecule type" value="Genomic_DNA"/>
</dbReference>
<dbReference type="EMBL" id="AE009440">
    <property type="protein sequence ID" value="AAP98701.1"/>
    <property type="molecule type" value="Genomic_DNA"/>
</dbReference>
<dbReference type="PIR" id="E86583">
    <property type="entry name" value="E86583"/>
</dbReference>
<dbReference type="PIR" id="F72040">
    <property type="entry name" value="F72040"/>
</dbReference>
<dbReference type="RefSeq" id="NP_224940.1">
    <property type="nucleotide sequence ID" value="NC_000922.1"/>
</dbReference>
<dbReference type="RefSeq" id="WP_010883382.1">
    <property type="nucleotide sequence ID" value="NZ_LN847257.1"/>
</dbReference>
<dbReference type="SMR" id="Q9Z7G1"/>
<dbReference type="STRING" id="406984.CPK_ORF00150"/>
<dbReference type="GeneID" id="45050799"/>
<dbReference type="KEGG" id="cpa:CP_0001"/>
<dbReference type="KEGG" id="cpj:hemB"/>
<dbReference type="KEGG" id="cpn:CPn_0744"/>
<dbReference type="KEGG" id="cpt:CpB0772"/>
<dbReference type="PATRIC" id="fig|115713.3.peg.820"/>
<dbReference type="eggNOG" id="COG0113">
    <property type="taxonomic scope" value="Bacteria"/>
</dbReference>
<dbReference type="HOGENOM" id="CLU_035731_0_0_0"/>
<dbReference type="OrthoDB" id="9805001at2"/>
<dbReference type="UniPathway" id="UPA00251">
    <property type="reaction ID" value="UER00318"/>
</dbReference>
<dbReference type="Proteomes" id="UP000000583">
    <property type="component" value="Chromosome"/>
</dbReference>
<dbReference type="Proteomes" id="UP000000801">
    <property type="component" value="Chromosome"/>
</dbReference>
<dbReference type="GO" id="GO:0005829">
    <property type="term" value="C:cytosol"/>
    <property type="evidence" value="ECO:0007669"/>
    <property type="project" value="TreeGrafter"/>
</dbReference>
<dbReference type="GO" id="GO:0004655">
    <property type="term" value="F:porphobilinogen synthase activity"/>
    <property type="evidence" value="ECO:0007669"/>
    <property type="project" value="UniProtKB-EC"/>
</dbReference>
<dbReference type="GO" id="GO:0008270">
    <property type="term" value="F:zinc ion binding"/>
    <property type="evidence" value="ECO:0007669"/>
    <property type="project" value="TreeGrafter"/>
</dbReference>
<dbReference type="GO" id="GO:0006782">
    <property type="term" value="P:protoporphyrinogen IX biosynthetic process"/>
    <property type="evidence" value="ECO:0007669"/>
    <property type="project" value="UniProtKB-UniPathway"/>
</dbReference>
<dbReference type="CDD" id="cd04823">
    <property type="entry name" value="ALAD_PBGS_aspartate_rich"/>
    <property type="match status" value="1"/>
</dbReference>
<dbReference type="FunFam" id="3.20.20.70:FF:000019">
    <property type="entry name" value="Delta-aminolevulinic acid dehydratase"/>
    <property type="match status" value="1"/>
</dbReference>
<dbReference type="Gene3D" id="3.20.20.70">
    <property type="entry name" value="Aldolase class I"/>
    <property type="match status" value="1"/>
</dbReference>
<dbReference type="InterPro" id="IPR001731">
    <property type="entry name" value="ALAD"/>
</dbReference>
<dbReference type="InterPro" id="IPR030656">
    <property type="entry name" value="ALAD_AS"/>
</dbReference>
<dbReference type="InterPro" id="IPR013785">
    <property type="entry name" value="Aldolase_TIM"/>
</dbReference>
<dbReference type="NCBIfam" id="NF006762">
    <property type="entry name" value="PRK09283.1"/>
    <property type="match status" value="1"/>
</dbReference>
<dbReference type="PANTHER" id="PTHR11458">
    <property type="entry name" value="DELTA-AMINOLEVULINIC ACID DEHYDRATASE"/>
    <property type="match status" value="1"/>
</dbReference>
<dbReference type="PANTHER" id="PTHR11458:SF0">
    <property type="entry name" value="DELTA-AMINOLEVULINIC ACID DEHYDRATASE"/>
    <property type="match status" value="1"/>
</dbReference>
<dbReference type="Pfam" id="PF00490">
    <property type="entry name" value="ALAD"/>
    <property type="match status" value="1"/>
</dbReference>
<dbReference type="PIRSF" id="PIRSF001415">
    <property type="entry name" value="Porphbilin_synth"/>
    <property type="match status" value="1"/>
</dbReference>
<dbReference type="PRINTS" id="PR00144">
    <property type="entry name" value="DALDHYDRTASE"/>
</dbReference>
<dbReference type="SMART" id="SM01004">
    <property type="entry name" value="ALAD"/>
    <property type="match status" value="1"/>
</dbReference>
<dbReference type="SUPFAM" id="SSF51569">
    <property type="entry name" value="Aldolase"/>
    <property type="match status" value="1"/>
</dbReference>
<dbReference type="PROSITE" id="PS00169">
    <property type="entry name" value="D_ALA_DEHYDRATASE"/>
    <property type="match status" value="1"/>
</dbReference>
<feature type="chain" id="PRO_0000140496" description="Delta-aminolevulinic acid dehydratase">
    <location>
        <begin position="1"/>
        <end position="332"/>
    </location>
</feature>
<feature type="active site" description="Schiff-base intermediate with substrate" evidence="1">
    <location>
        <position position="199"/>
    </location>
</feature>
<feature type="active site" description="Schiff-base intermediate with substrate" evidence="1">
    <location>
        <position position="252"/>
    </location>
</feature>
<feature type="binding site" evidence="1">
    <location>
        <position position="209"/>
    </location>
    <ligand>
        <name>5-aminolevulinate</name>
        <dbReference type="ChEBI" id="CHEBI:356416"/>
        <label>1</label>
    </ligand>
</feature>
<feature type="binding site" evidence="1">
    <location>
        <position position="221"/>
    </location>
    <ligand>
        <name>5-aminolevulinate</name>
        <dbReference type="ChEBI" id="CHEBI:356416"/>
        <label>1</label>
    </ligand>
</feature>
<feature type="binding site" evidence="1">
    <location>
        <position position="237"/>
    </location>
    <ligand>
        <name>Mg(2+)</name>
        <dbReference type="ChEBI" id="CHEBI:18420"/>
    </ligand>
</feature>
<feature type="binding site" evidence="1">
    <location>
        <position position="278"/>
    </location>
    <ligand>
        <name>5-aminolevulinate</name>
        <dbReference type="ChEBI" id="CHEBI:356416"/>
        <label>2</label>
    </ligand>
</feature>
<feature type="binding site" evidence="1">
    <location>
        <position position="317"/>
    </location>
    <ligand>
        <name>5-aminolevulinate</name>
        <dbReference type="ChEBI" id="CHEBI:356416"/>
        <label>2</label>
    </ligand>
</feature>
<reference key="1">
    <citation type="journal article" date="1999" name="Nat. Genet.">
        <title>Comparative genomes of Chlamydia pneumoniae and C. trachomatis.</title>
        <authorList>
            <person name="Kalman S."/>
            <person name="Mitchell W.P."/>
            <person name="Marathe R."/>
            <person name="Lammel C.J."/>
            <person name="Fan J."/>
            <person name="Hyman R.W."/>
            <person name="Olinger L."/>
            <person name="Grimwood J."/>
            <person name="Davis R.W."/>
            <person name="Stephens R.S."/>
        </authorList>
    </citation>
    <scope>NUCLEOTIDE SEQUENCE [LARGE SCALE GENOMIC DNA]</scope>
    <source>
        <strain>CWL029</strain>
    </source>
</reference>
<reference key="2">
    <citation type="journal article" date="2000" name="Nucleic Acids Res.">
        <title>Genome sequences of Chlamydia trachomatis MoPn and Chlamydia pneumoniae AR39.</title>
        <authorList>
            <person name="Read T.D."/>
            <person name="Brunham R.C."/>
            <person name="Shen C."/>
            <person name="Gill S.R."/>
            <person name="Heidelberg J.F."/>
            <person name="White O."/>
            <person name="Hickey E.K."/>
            <person name="Peterson J.D."/>
            <person name="Utterback T.R."/>
            <person name="Berry K.J."/>
            <person name="Bass S."/>
            <person name="Linher K.D."/>
            <person name="Weidman J.F."/>
            <person name="Khouri H.M."/>
            <person name="Craven B."/>
            <person name="Bowman C."/>
            <person name="Dodson R.J."/>
            <person name="Gwinn M.L."/>
            <person name="Nelson W.C."/>
            <person name="DeBoy R.T."/>
            <person name="Kolonay J.F."/>
            <person name="McClarty G."/>
            <person name="Salzberg S.L."/>
            <person name="Eisen J.A."/>
            <person name="Fraser C.M."/>
        </authorList>
    </citation>
    <scope>NUCLEOTIDE SEQUENCE [LARGE SCALE GENOMIC DNA]</scope>
    <source>
        <strain>AR39</strain>
    </source>
</reference>
<reference key="3">
    <citation type="journal article" date="2000" name="Nucleic Acids Res.">
        <title>Comparison of whole genome sequences of Chlamydia pneumoniae J138 from Japan and CWL029 from USA.</title>
        <authorList>
            <person name="Shirai M."/>
            <person name="Hirakawa H."/>
            <person name="Kimoto M."/>
            <person name="Tabuchi M."/>
            <person name="Kishi F."/>
            <person name="Ouchi K."/>
            <person name="Shiba T."/>
            <person name="Ishii K."/>
            <person name="Hattori M."/>
            <person name="Kuhara S."/>
            <person name="Nakazawa T."/>
        </authorList>
    </citation>
    <scope>NUCLEOTIDE SEQUENCE [LARGE SCALE GENOMIC DNA]</scope>
    <source>
        <strain>J138</strain>
    </source>
</reference>
<reference key="4">
    <citation type="submission" date="2002-05" db="EMBL/GenBank/DDBJ databases">
        <title>The genome sequence of Chlamydia pneumoniae TW183 and comparison with other Chlamydia strains based on whole genome sequence analysis.</title>
        <authorList>
            <person name="Geng M.M."/>
            <person name="Schuhmacher A."/>
            <person name="Muehldorfer I."/>
            <person name="Bensch K.W."/>
            <person name="Schaefer K.P."/>
            <person name="Schneider S."/>
            <person name="Pohl T."/>
            <person name="Essig A."/>
            <person name="Marre R."/>
            <person name="Melchers K."/>
        </authorList>
    </citation>
    <scope>NUCLEOTIDE SEQUENCE [LARGE SCALE GENOMIC DNA]</scope>
    <source>
        <strain>TW-183</strain>
    </source>
</reference>
<evidence type="ECO:0000250" key="1"/>
<evidence type="ECO:0000305" key="2"/>
<proteinExistence type="inferred from homology"/>
<comment type="function">
    <text evidence="1">Catalyzes an early step in the biosynthesis of tetrapyrroles. Binds two molecules of 5-aminolevulinate per subunit, each at a distinct site, and catalyzes their condensation to form porphobilinogen (By similarity).</text>
</comment>
<comment type="catalytic activity">
    <reaction>
        <text>2 5-aminolevulinate = porphobilinogen + 2 H2O + H(+)</text>
        <dbReference type="Rhea" id="RHEA:24064"/>
        <dbReference type="ChEBI" id="CHEBI:15377"/>
        <dbReference type="ChEBI" id="CHEBI:15378"/>
        <dbReference type="ChEBI" id="CHEBI:58126"/>
        <dbReference type="ChEBI" id="CHEBI:356416"/>
        <dbReference type="EC" id="4.2.1.24"/>
    </reaction>
</comment>
<comment type="pathway">
    <text>Porphyrin-containing compound metabolism; protoporphyrin-IX biosynthesis; coproporphyrinogen-III from 5-aminolevulinate: step 1/4.</text>
</comment>
<comment type="subunit">
    <text evidence="1">Homooctamer.</text>
</comment>
<comment type="similarity">
    <text evidence="2">Belongs to the ALAD family.</text>
</comment>
<keyword id="KW-0350">Heme biosynthesis</keyword>
<keyword id="KW-0456">Lyase</keyword>
<keyword id="KW-0460">Magnesium</keyword>
<keyword id="KW-0479">Metal-binding</keyword>
<keyword id="KW-0627">Porphyrin biosynthesis</keyword>
<protein>
    <recommendedName>
        <fullName>Delta-aminolevulinic acid dehydratase</fullName>
        <shortName>ALAD</shortName>
        <shortName>ALADH</shortName>
        <ecNumber>4.2.1.24</ecNumber>
    </recommendedName>
    <alternativeName>
        <fullName>Porphobilinogen synthase</fullName>
    </alternativeName>
</protein>
<organism>
    <name type="scientific">Chlamydia pneumoniae</name>
    <name type="common">Chlamydophila pneumoniae</name>
    <dbReference type="NCBI Taxonomy" id="83558"/>
    <lineage>
        <taxon>Bacteria</taxon>
        <taxon>Pseudomonadati</taxon>
        <taxon>Chlamydiota</taxon>
        <taxon>Chlamydiia</taxon>
        <taxon>Chlamydiales</taxon>
        <taxon>Chlamydiaceae</taxon>
        <taxon>Chlamydia/Chlamydophila group</taxon>
        <taxon>Chlamydia</taxon>
    </lineage>
</organism>
<sequence>MSSLTLSRRPRRNRKTAAIRDLLAETHLSPKDLIAPFFVKYGNNIKEEIPSLPGVFRWSLDLLLKEIERLCTYGLRAVMLFPIIPDDLKDAYGSYSSNPKNILCHSIHEIKNAFPHLCLISDIALDPYTTHGHDGIFLNGEVLNDESVRIFGNIATLHAEMGADIVAPSDMMDGRIGYIRSKLDQSGYSKTSIMSYSVKYASCLYSPFRDALSSHVTSGDKKQYQMNPKNVLEALLESSLDEEEGADILMVKPAGLYLDVIYRIRQNTCLPLAAYQVSGEYAMILSAFQQGWLDKETLFHESLIAIKRAGADMIISYSAPFILELLHQGFEF</sequence>
<accession>Q9Z7G1</accession>
<gene>
    <name type="primary">hemB</name>
    <name type="ordered locus">CPn_0744</name>
    <name type="ordered locus">CP_0001</name>
    <name type="ordered locus">CpB0772</name>
</gene>
<name>HEM2_CHLPN</name>